<keyword id="KW-0150">Chloroplast</keyword>
<keyword id="KW-0934">Plastid</keyword>
<accession>Q32616</accession>
<geneLocation type="chloroplast"/>
<protein>
    <recommendedName>
        <fullName>Uncharacterized protein ycf66</fullName>
    </recommendedName>
    <alternativeName>
        <fullName>ORF135</fullName>
    </alternativeName>
</protein>
<evidence type="ECO:0000305" key="1"/>
<reference key="1">
    <citation type="journal article" date="1986" name="Nature">
        <title>Chloroplast gene organization deduced from complete sequence of liverwort Marchantia polymorpha chloroplast DNA.</title>
        <authorList>
            <person name="Ohyama K."/>
            <person name="Fukuzawa H."/>
            <person name="Kohchi T."/>
            <person name="Shirai H."/>
            <person name="Sano T."/>
            <person name="Sano S."/>
            <person name="Umesono K."/>
            <person name="Shiki Y."/>
            <person name="Takeuchi M."/>
            <person name="Chang Z."/>
            <person name="Aota S."/>
            <person name="Inokuchi H."/>
            <person name="Ozeki H."/>
        </authorList>
    </citation>
    <scope>NUCLEOTIDE SEQUENCE [LARGE SCALE GENOMIC DNA]</scope>
</reference>
<reference key="2">
    <citation type="journal article" date="1988" name="J. Mol. Biol.">
        <title>Structure and organization of Marchantia polymorpha chloroplast genome. II. Gene organization of the large single copy region from rps'12 to atpB.</title>
        <authorList>
            <person name="Umesono K."/>
            <person name="Inokuchi H."/>
            <person name="Shiki Y."/>
            <person name="Takeuchi M."/>
            <person name="Chang Z."/>
            <person name="Fukuzawa H."/>
            <person name="Kohchi T."/>
            <person name="Shirai H."/>
            <person name="Ohyama K."/>
            <person name="Ozeki H."/>
        </authorList>
    </citation>
    <scope>NUCLEOTIDE SEQUENCE [GENOMIC DNA]</scope>
</reference>
<dbReference type="EMBL" id="X04465">
    <property type="protein sequence ID" value="CAA28060.1"/>
    <property type="molecule type" value="Genomic_DNA"/>
</dbReference>
<dbReference type="PIR" id="S01571">
    <property type="entry name" value="A05009"/>
</dbReference>
<dbReference type="RefSeq" id="NP_039274.1">
    <property type="nucleotide sequence ID" value="NC_001319.1"/>
</dbReference>
<dbReference type="GO" id="GO:0009507">
    <property type="term" value="C:chloroplast"/>
    <property type="evidence" value="ECO:0007669"/>
    <property type="project" value="UniProtKB-SubCell"/>
</dbReference>
<dbReference type="InterPro" id="IPR010004">
    <property type="entry name" value="Uncharacterised_Ycf66"/>
</dbReference>
<dbReference type="Pfam" id="PF07444">
    <property type="entry name" value="Ycf66_N"/>
    <property type="match status" value="1"/>
</dbReference>
<feature type="chain" id="PRO_0000217391" description="Uncharacterized protein ycf66">
    <location>
        <begin position="1"/>
        <end position="135"/>
    </location>
</feature>
<gene>
    <name type="primary">ycf66</name>
</gene>
<comment type="subcellular location">
    <subcellularLocation>
        <location>Plastid</location>
        <location>Chloroplast</location>
    </subcellularLocation>
</comment>
<comment type="similarity">
    <text evidence="1">Belongs to the ycf66 family.</text>
</comment>
<name>YCF66_MARPO</name>
<sequence>MNHMELGPSTILGVGLIIIGLFLYALKLREPYVSRDYDFFFSCIGLLCGGILFFQGWRLDPILLLSQILLSGTTIFFIAESLYLRKNLNFVKSKKKYINLAKKNIYKYIYENFKLKKKWNELNYTRHIFYKKKKH</sequence>
<proteinExistence type="inferred from homology"/>
<organism>
    <name type="scientific">Marchantia polymorpha</name>
    <name type="common">Common liverwort</name>
    <name type="synonym">Marchantia aquatica</name>
    <dbReference type="NCBI Taxonomy" id="3197"/>
    <lineage>
        <taxon>Eukaryota</taxon>
        <taxon>Viridiplantae</taxon>
        <taxon>Streptophyta</taxon>
        <taxon>Embryophyta</taxon>
        <taxon>Marchantiophyta</taxon>
        <taxon>Marchantiopsida</taxon>
        <taxon>Marchantiidae</taxon>
        <taxon>Marchantiales</taxon>
        <taxon>Marchantiaceae</taxon>
        <taxon>Marchantia</taxon>
    </lineage>
</organism>